<feature type="chain" id="PRO_0000159888" description="3-dehydroquinate dehydratase">
    <location>
        <begin position="1"/>
        <end position="146"/>
    </location>
</feature>
<feature type="active site" description="Proton acceptor" evidence="1">
    <location>
        <position position="24"/>
    </location>
</feature>
<feature type="active site" description="Proton donor" evidence="1">
    <location>
        <position position="101"/>
    </location>
</feature>
<feature type="binding site" evidence="1">
    <location>
        <position position="75"/>
    </location>
    <ligand>
        <name>substrate</name>
    </ligand>
</feature>
<feature type="binding site" evidence="1">
    <location>
        <position position="81"/>
    </location>
    <ligand>
        <name>substrate</name>
    </ligand>
</feature>
<feature type="binding site" evidence="1">
    <location>
        <position position="88"/>
    </location>
    <ligand>
        <name>substrate</name>
    </ligand>
</feature>
<feature type="binding site" evidence="1">
    <location>
        <begin position="102"/>
        <end position="103"/>
    </location>
    <ligand>
        <name>substrate</name>
    </ligand>
</feature>
<feature type="binding site" evidence="1">
    <location>
        <position position="112"/>
    </location>
    <ligand>
        <name>substrate</name>
    </ligand>
</feature>
<feature type="site" description="Transition state stabilizer" evidence="1">
    <location>
        <position position="19"/>
    </location>
</feature>
<comment type="function">
    <text evidence="1">Catalyzes a trans-dehydration via an enolate intermediate.</text>
</comment>
<comment type="catalytic activity">
    <reaction evidence="1">
        <text>3-dehydroquinate = 3-dehydroshikimate + H2O</text>
        <dbReference type="Rhea" id="RHEA:21096"/>
        <dbReference type="ChEBI" id="CHEBI:15377"/>
        <dbReference type="ChEBI" id="CHEBI:16630"/>
        <dbReference type="ChEBI" id="CHEBI:32364"/>
        <dbReference type="EC" id="4.2.1.10"/>
    </reaction>
</comment>
<comment type="pathway">
    <text evidence="1">Metabolic intermediate biosynthesis; chorismate biosynthesis; chorismate from D-erythrose 4-phosphate and phosphoenolpyruvate: step 3/7.</text>
</comment>
<comment type="subunit">
    <text evidence="1">Homododecamer.</text>
</comment>
<comment type="similarity">
    <text evidence="1">Belongs to the type-II 3-dehydroquinase family.</text>
</comment>
<organism>
    <name type="scientific">Caulobacter vibrioides (strain ATCC 19089 / CIP 103742 / CB 15)</name>
    <name type="common">Caulobacter crescentus</name>
    <dbReference type="NCBI Taxonomy" id="190650"/>
    <lineage>
        <taxon>Bacteria</taxon>
        <taxon>Pseudomonadati</taxon>
        <taxon>Pseudomonadota</taxon>
        <taxon>Alphaproteobacteria</taxon>
        <taxon>Caulobacterales</taxon>
        <taxon>Caulobacteraceae</taxon>
        <taxon>Caulobacter</taxon>
    </lineage>
</organism>
<proteinExistence type="inferred from homology"/>
<sequence>MVKPIHVLSGPNLNLLGTREPEIYGKDTLDDVRTRCEARAASRGVSVVFRQSNHEGVLIDWVHEARESASALVINPAGYGHTSIALLDALKTLSIPVIECHLSNPAAREEFRRHTYVSLAATGIVSGFGAASYELAIEAAFGLIRA</sequence>
<protein>
    <recommendedName>
        <fullName evidence="1">3-dehydroquinate dehydratase</fullName>
        <shortName evidence="1">3-dehydroquinase</shortName>
        <ecNumber evidence="1">4.2.1.10</ecNumber>
    </recommendedName>
    <alternativeName>
        <fullName evidence="1">Type II DHQase</fullName>
    </alternativeName>
</protein>
<reference key="1">
    <citation type="journal article" date="2001" name="Proc. Natl. Acad. Sci. U.S.A.">
        <title>Complete genome sequence of Caulobacter crescentus.</title>
        <authorList>
            <person name="Nierman W.C."/>
            <person name="Feldblyum T.V."/>
            <person name="Laub M.T."/>
            <person name="Paulsen I.T."/>
            <person name="Nelson K.E."/>
            <person name="Eisen J.A."/>
            <person name="Heidelberg J.F."/>
            <person name="Alley M.R.K."/>
            <person name="Ohta N."/>
            <person name="Maddock J.R."/>
            <person name="Potocka I."/>
            <person name="Nelson W.C."/>
            <person name="Newton A."/>
            <person name="Stephens C."/>
            <person name="Phadke N.D."/>
            <person name="Ely B."/>
            <person name="DeBoy R.T."/>
            <person name="Dodson R.J."/>
            <person name="Durkin A.S."/>
            <person name="Gwinn M.L."/>
            <person name="Haft D.H."/>
            <person name="Kolonay J.F."/>
            <person name="Smit J."/>
            <person name="Craven M.B."/>
            <person name="Khouri H.M."/>
            <person name="Shetty J."/>
            <person name="Berry K.J."/>
            <person name="Utterback T.R."/>
            <person name="Tran K."/>
            <person name="Wolf A.M."/>
            <person name="Vamathevan J.J."/>
            <person name="Ermolaeva M.D."/>
            <person name="White O."/>
            <person name="Salzberg S.L."/>
            <person name="Venter J.C."/>
            <person name="Shapiro L."/>
            <person name="Fraser C.M."/>
        </authorList>
    </citation>
    <scope>NUCLEOTIDE SEQUENCE [LARGE SCALE GENOMIC DNA]</scope>
    <source>
        <strain>ATCC 19089 / CIP 103742 / CB 15</strain>
    </source>
</reference>
<gene>
    <name evidence="1" type="primary">aroQ</name>
    <name type="ordered locus">CC_1882</name>
</gene>
<dbReference type="EC" id="4.2.1.10" evidence="1"/>
<dbReference type="EMBL" id="AE005673">
    <property type="protein sequence ID" value="AAK23857.1"/>
    <property type="molecule type" value="Genomic_DNA"/>
</dbReference>
<dbReference type="PIR" id="E87482">
    <property type="entry name" value="E87482"/>
</dbReference>
<dbReference type="RefSeq" id="NP_420689.1">
    <property type="nucleotide sequence ID" value="NC_002696.2"/>
</dbReference>
<dbReference type="RefSeq" id="WP_010919748.1">
    <property type="nucleotide sequence ID" value="NC_002696.2"/>
</dbReference>
<dbReference type="SMR" id="Q9A744"/>
<dbReference type="STRING" id="190650.CC_1882"/>
<dbReference type="EnsemblBacteria" id="AAK23857">
    <property type="protein sequence ID" value="AAK23857"/>
    <property type="gene ID" value="CC_1882"/>
</dbReference>
<dbReference type="KEGG" id="ccr:CC_1882"/>
<dbReference type="PATRIC" id="fig|190650.5.peg.1899"/>
<dbReference type="eggNOG" id="COG0757">
    <property type="taxonomic scope" value="Bacteria"/>
</dbReference>
<dbReference type="HOGENOM" id="CLU_090968_2_0_5"/>
<dbReference type="BioCyc" id="CAULO:CC1882-MONOMER"/>
<dbReference type="UniPathway" id="UPA00053">
    <property type="reaction ID" value="UER00086"/>
</dbReference>
<dbReference type="Proteomes" id="UP000001816">
    <property type="component" value="Chromosome"/>
</dbReference>
<dbReference type="GO" id="GO:0003855">
    <property type="term" value="F:3-dehydroquinate dehydratase activity"/>
    <property type="evidence" value="ECO:0007669"/>
    <property type="project" value="UniProtKB-UniRule"/>
</dbReference>
<dbReference type="GO" id="GO:0008652">
    <property type="term" value="P:amino acid biosynthetic process"/>
    <property type="evidence" value="ECO:0007669"/>
    <property type="project" value="UniProtKB-KW"/>
</dbReference>
<dbReference type="GO" id="GO:0009073">
    <property type="term" value="P:aromatic amino acid family biosynthetic process"/>
    <property type="evidence" value="ECO:0007669"/>
    <property type="project" value="UniProtKB-KW"/>
</dbReference>
<dbReference type="GO" id="GO:0009423">
    <property type="term" value="P:chorismate biosynthetic process"/>
    <property type="evidence" value="ECO:0007669"/>
    <property type="project" value="UniProtKB-UniRule"/>
</dbReference>
<dbReference type="GO" id="GO:0019631">
    <property type="term" value="P:quinate catabolic process"/>
    <property type="evidence" value="ECO:0007669"/>
    <property type="project" value="TreeGrafter"/>
</dbReference>
<dbReference type="CDD" id="cd00466">
    <property type="entry name" value="DHQase_II"/>
    <property type="match status" value="1"/>
</dbReference>
<dbReference type="Gene3D" id="3.40.50.9100">
    <property type="entry name" value="Dehydroquinase, class II"/>
    <property type="match status" value="1"/>
</dbReference>
<dbReference type="HAMAP" id="MF_00169">
    <property type="entry name" value="AroQ"/>
    <property type="match status" value="1"/>
</dbReference>
<dbReference type="InterPro" id="IPR001874">
    <property type="entry name" value="DHquinase_II"/>
</dbReference>
<dbReference type="InterPro" id="IPR018509">
    <property type="entry name" value="DHquinase_II_CS"/>
</dbReference>
<dbReference type="InterPro" id="IPR036441">
    <property type="entry name" value="DHquinase_II_sf"/>
</dbReference>
<dbReference type="NCBIfam" id="TIGR01088">
    <property type="entry name" value="aroQ"/>
    <property type="match status" value="1"/>
</dbReference>
<dbReference type="NCBIfam" id="NF003805">
    <property type="entry name" value="PRK05395.1-2"/>
    <property type="match status" value="1"/>
</dbReference>
<dbReference type="NCBIfam" id="NF003806">
    <property type="entry name" value="PRK05395.1-3"/>
    <property type="match status" value="1"/>
</dbReference>
<dbReference type="NCBIfam" id="NF003807">
    <property type="entry name" value="PRK05395.1-4"/>
    <property type="match status" value="1"/>
</dbReference>
<dbReference type="PANTHER" id="PTHR21272">
    <property type="entry name" value="CATABOLIC 3-DEHYDROQUINASE"/>
    <property type="match status" value="1"/>
</dbReference>
<dbReference type="PANTHER" id="PTHR21272:SF3">
    <property type="entry name" value="CATABOLIC 3-DEHYDROQUINASE"/>
    <property type="match status" value="1"/>
</dbReference>
<dbReference type="Pfam" id="PF01220">
    <property type="entry name" value="DHquinase_II"/>
    <property type="match status" value="1"/>
</dbReference>
<dbReference type="PIRSF" id="PIRSF001399">
    <property type="entry name" value="DHquinase_II"/>
    <property type="match status" value="1"/>
</dbReference>
<dbReference type="SUPFAM" id="SSF52304">
    <property type="entry name" value="Type II 3-dehydroquinate dehydratase"/>
    <property type="match status" value="1"/>
</dbReference>
<dbReference type="PROSITE" id="PS01029">
    <property type="entry name" value="DEHYDROQUINASE_II"/>
    <property type="match status" value="1"/>
</dbReference>
<name>AROQ_CAUVC</name>
<accession>Q9A744</accession>
<evidence type="ECO:0000255" key="1">
    <source>
        <dbReference type="HAMAP-Rule" id="MF_00169"/>
    </source>
</evidence>
<keyword id="KW-0028">Amino-acid biosynthesis</keyword>
<keyword id="KW-0057">Aromatic amino acid biosynthesis</keyword>
<keyword id="KW-0456">Lyase</keyword>
<keyword id="KW-1185">Reference proteome</keyword>